<reference key="1">
    <citation type="journal article" date="2003" name="PLoS Biol.">
        <title>The genome sequence of Caenorhabditis briggsae: a platform for comparative genomics.</title>
        <authorList>
            <person name="Stein L.D."/>
            <person name="Bao Z."/>
            <person name="Blasiar D."/>
            <person name="Blumenthal T."/>
            <person name="Brent M.R."/>
            <person name="Chen N."/>
            <person name="Chinwalla A."/>
            <person name="Clarke L."/>
            <person name="Clee C."/>
            <person name="Coghlan A."/>
            <person name="Coulson A."/>
            <person name="D'Eustachio P."/>
            <person name="Fitch D.H.A."/>
            <person name="Fulton L.A."/>
            <person name="Fulton R.E."/>
            <person name="Griffiths-Jones S."/>
            <person name="Harris T.W."/>
            <person name="Hillier L.W."/>
            <person name="Kamath R."/>
            <person name="Kuwabara P.E."/>
            <person name="Mardis E.R."/>
            <person name="Marra M.A."/>
            <person name="Miner T.L."/>
            <person name="Minx P."/>
            <person name="Mullikin J.C."/>
            <person name="Plumb R.W."/>
            <person name="Rogers J."/>
            <person name="Schein J.E."/>
            <person name="Sohrmann M."/>
            <person name="Spieth J."/>
            <person name="Stajich J.E."/>
            <person name="Wei C."/>
            <person name="Willey D."/>
            <person name="Wilson R.K."/>
            <person name="Durbin R.M."/>
            <person name="Waterston R.H."/>
        </authorList>
    </citation>
    <scope>NUCLEOTIDE SEQUENCE [LARGE SCALE GENOMIC DNA]</scope>
    <source>
        <strain>AF16</strain>
    </source>
</reference>
<sequence>MAPETNEKCKACGGFNFSMIDGFKYCDRCGTLLENFEELEAEEGGIQQTRGAGKIKIKKKGGDDGEKKTTNLVSTNESNVQIMRKALEKRSDFFSRQALKNDELAFPHESTPDYLYRLGLRLAAFTQVLAKVGHVLVKELNFEPRVLPTILATFQRYLAHCHVAFCHSEQCGSDEQLRFVAMMENLEFEQQEREEKRRKKLARRGKGVKALSKSAAAWTLLTQGNITENLDLDSEEDEEEEENPNLNKSMENLEFEDTQNDETVAVNDTTVGFVRKITTALSTEALRRARQMILNLEILVAIIHSALMSCGYRNVLASDVVRWIREDRFRISLRSIRLMRHSAKEQETKEAMTKVDYAEPYLRFPLYEITRTSTLFHQSLNLNEKLVSLNFETLAARLCDNLNLPVEFLSRVLLLESMIPCDVNPSLRKQADVSMGHNCEQLAAIQPKLYNSGFLSCFGRKERTWREADNCDESVKLALLRIQCICRVLLSPDTKLMAYILLVFRLTFDIDNATCSPDSKDALKFDIDTWIHQLEMRLKCWQEHDMSMVLRSSCPVPDIQISTPFGPNYSYYDKKGNPWVHRLRRQVGFAKCIPSEMSFNSTSSLPTVFDIRQNRFKTERRQLEAVMSPLKFQRVILRKEMERDPEKYRNIVDPDSEKTFFKDFTVRKVLENTQKIAETSNSFDEYFPCASRYTIYKRPDWIQNCTARSKQLSPKIGPYRFYISNQACDDLLGVATSSFSPRFKFLLDSLALIIGEDPKALYTAFVMLEMHLTSSDTLETIRESLLRSKPITVKCQKFRKTMWHVECLRRVVTEHPVGKIEDLKYFIVASTRESQEELAESSEAYLMHFRNHEIREDLTSLEAEKVQNRVLKLAYDFETFFGILAVKMW</sequence>
<organism>
    <name type="scientific">Caenorhabditis briggsae</name>
    <dbReference type="NCBI Taxonomy" id="6238"/>
    <lineage>
        <taxon>Eukaryota</taxon>
        <taxon>Metazoa</taxon>
        <taxon>Ecdysozoa</taxon>
        <taxon>Nematoda</taxon>
        <taxon>Chromadorea</taxon>
        <taxon>Rhabditida</taxon>
        <taxon>Rhabditina</taxon>
        <taxon>Rhabditomorpha</taxon>
        <taxon>Rhabditoidea</taxon>
        <taxon>Rhabditidae</taxon>
        <taxon>Peloderinae</taxon>
        <taxon>Caenorhabditis</taxon>
    </lineage>
</organism>
<gene>
    <name type="ORF">CBG15174</name>
</gene>
<accession>A8XLS0</accession>
<protein>
    <recommendedName>
        <fullName>TATA box-binding protein-associated factor RNA polymerase I subunit B</fullName>
    </recommendedName>
    <alternativeName>
        <fullName>TATA box-binding protein-associated factor 1B</fullName>
        <shortName>TBP-associated factor 1B</shortName>
    </alternativeName>
</protein>
<proteinExistence type="inferred from homology"/>
<keyword id="KW-0238">DNA-binding</keyword>
<keyword id="KW-0479">Metal-binding</keyword>
<keyword id="KW-0539">Nucleus</keyword>
<keyword id="KW-1185">Reference proteome</keyword>
<keyword id="KW-0804">Transcription</keyword>
<keyword id="KW-0805">Transcription regulation</keyword>
<keyword id="KW-0862">Zinc</keyword>
<keyword id="KW-0863">Zinc-finger</keyword>
<name>TAF1B_CAEBR</name>
<comment type="function">
    <text evidence="1">Component of RNA polymerase I core factor complex that acts as a GTF2B/TFIIB-like factor and plays a key role in multiple steps during transcription initiation such as pre-initiation complex (PIC) assembly and postpolymerase recruitment events in polymerase I (Pol I) transcription. Binds rDNA promoters and plays a role in Pol I recruitment (By similarity).</text>
</comment>
<comment type="subcellular location">
    <subcellularLocation>
        <location evidence="1">Nucleus</location>
        <location evidence="1">Nucleolus</location>
    </subcellularLocation>
</comment>
<comment type="domain">
    <text evidence="1">Although it shares weak sequence similarity with GTF2B/TFIIB, displays a similar subdomain organization as GTF2B/TFIIB, with a N-terminal zinc finger, a connecting region (composed of B-reader and B-linker regions), followed by 2 cyclin folds.</text>
</comment>
<comment type="similarity">
    <text evidence="3">Belongs to the RRN7/TAF1B family.</text>
</comment>
<feature type="chain" id="PRO_0000416874" description="TATA box-binding protein-associated factor RNA polymerase I subunit B">
    <location>
        <begin position="1"/>
        <end position="889"/>
    </location>
</feature>
<feature type="zinc finger region" description="RRN7-type">
    <location>
        <begin position="1"/>
        <end position="33"/>
    </location>
</feature>
<feature type="region of interest" description="B-reader" evidence="1">
    <location>
        <begin position="35"/>
        <end position="101"/>
    </location>
</feature>
<feature type="region of interest" description="B-linker" evidence="1">
    <location>
        <begin position="102"/>
        <end position="113"/>
    </location>
</feature>
<feature type="region of interest" description="N-terminal cyclin fold" evidence="1">
    <location>
        <begin position="114"/>
        <end position="351"/>
    </location>
</feature>
<feature type="region of interest" description="Disordered" evidence="2">
    <location>
        <begin position="229"/>
        <end position="253"/>
    </location>
</feature>
<feature type="region of interest" description="C-terminal cyclin fold" evidence="1">
    <location>
        <begin position="352"/>
        <end position="510"/>
    </location>
</feature>
<feature type="compositionally biased region" description="Acidic residues" evidence="2">
    <location>
        <begin position="230"/>
        <end position="243"/>
    </location>
</feature>
<feature type="binding site" evidence="1">
    <location>
        <position position="9"/>
    </location>
    <ligand>
        <name>Zn(2+)</name>
        <dbReference type="ChEBI" id="CHEBI:29105"/>
    </ligand>
</feature>
<feature type="binding site" evidence="1">
    <location>
        <position position="12"/>
    </location>
    <ligand>
        <name>Zn(2+)</name>
        <dbReference type="ChEBI" id="CHEBI:29105"/>
    </ligand>
</feature>
<feature type="binding site" evidence="1">
    <location>
        <position position="26"/>
    </location>
    <ligand>
        <name>Zn(2+)</name>
        <dbReference type="ChEBI" id="CHEBI:29105"/>
    </ligand>
</feature>
<feature type="binding site" evidence="1">
    <location>
        <position position="29"/>
    </location>
    <ligand>
        <name>Zn(2+)</name>
        <dbReference type="ChEBI" id="CHEBI:29105"/>
    </ligand>
</feature>
<evidence type="ECO:0000250" key="1"/>
<evidence type="ECO:0000256" key="2">
    <source>
        <dbReference type="SAM" id="MobiDB-lite"/>
    </source>
</evidence>
<evidence type="ECO:0000305" key="3"/>
<dbReference type="EMBL" id="HE601055">
    <property type="protein sequence ID" value="CAP33574.2"/>
    <property type="molecule type" value="Genomic_DNA"/>
</dbReference>
<dbReference type="RefSeq" id="XP_045095653.1">
    <property type="nucleotide sequence ID" value="XM_045243310.1"/>
</dbReference>
<dbReference type="FunCoup" id="A8XLS0">
    <property type="interactions" value="1418"/>
</dbReference>
<dbReference type="STRING" id="6238.A8XLS0"/>
<dbReference type="GeneID" id="8584893"/>
<dbReference type="WormBase" id="CBG15174">
    <property type="protein sequence ID" value="CBP38646"/>
    <property type="gene ID" value="WBGene00035498"/>
</dbReference>
<dbReference type="eggNOG" id="ENOG502SDRV">
    <property type="taxonomic scope" value="Eukaryota"/>
</dbReference>
<dbReference type="HOGENOM" id="CLU_015505_0_0_1"/>
<dbReference type="InParanoid" id="A8XLS0"/>
<dbReference type="OMA" id="WIHQLEM"/>
<dbReference type="Proteomes" id="UP000008549">
    <property type="component" value="Unassembled WGS sequence"/>
</dbReference>
<dbReference type="GO" id="GO:0070860">
    <property type="term" value="C:RNA polymerase I core factor complex"/>
    <property type="evidence" value="ECO:0000318"/>
    <property type="project" value="GO_Central"/>
</dbReference>
<dbReference type="GO" id="GO:0005668">
    <property type="term" value="C:RNA polymerase transcription factor SL1 complex"/>
    <property type="evidence" value="ECO:0000318"/>
    <property type="project" value="GO_Central"/>
</dbReference>
<dbReference type="GO" id="GO:0001164">
    <property type="term" value="F:RNA polymerase I core promoter sequence-specific DNA binding"/>
    <property type="evidence" value="ECO:0000250"/>
    <property type="project" value="UniProtKB"/>
</dbReference>
<dbReference type="GO" id="GO:0008270">
    <property type="term" value="F:zinc ion binding"/>
    <property type="evidence" value="ECO:0007669"/>
    <property type="project" value="UniProtKB-KW"/>
</dbReference>
<dbReference type="GO" id="GO:0042790">
    <property type="term" value="P:nucleolar large rRNA transcription by RNA polymerase I"/>
    <property type="evidence" value="ECO:0000318"/>
    <property type="project" value="GO_Central"/>
</dbReference>
<dbReference type="GO" id="GO:0001188">
    <property type="term" value="P:RNA polymerase I preinitiation complex assembly"/>
    <property type="evidence" value="ECO:0000250"/>
    <property type="project" value="UniProtKB"/>
</dbReference>
<dbReference type="InterPro" id="IPR048538">
    <property type="entry name" value="Rrn7_cyclin_C"/>
</dbReference>
<dbReference type="InterPro" id="IPR033599">
    <property type="entry name" value="TAF1B/Rrn7"/>
</dbReference>
<dbReference type="InterPro" id="IPR021752">
    <property type="entry name" value="TF_Rrn7_Zf"/>
</dbReference>
<dbReference type="PANTHER" id="PTHR31576">
    <property type="entry name" value="TATA BOX-BINDING PROTEIN-ASSOCIATED FACTOR RNA POLYMERASE I SUBUNIT B"/>
    <property type="match status" value="1"/>
</dbReference>
<dbReference type="PANTHER" id="PTHR31576:SF2">
    <property type="entry name" value="TATA BOX-BINDING PROTEIN-ASSOCIATED FACTOR RNA POLYMERASE I SUBUNIT B"/>
    <property type="match status" value="1"/>
</dbReference>
<dbReference type="Pfam" id="PF20645">
    <property type="entry name" value="Rrn7_cyclin_C"/>
    <property type="match status" value="1"/>
</dbReference>
<dbReference type="Pfam" id="PF11781">
    <property type="entry name" value="Zn_ribbon_RRN7"/>
    <property type="match status" value="1"/>
</dbReference>